<protein>
    <recommendedName>
        <fullName evidence="1">Small ribosomal subunit protein bS16</fullName>
    </recommendedName>
    <alternativeName>
        <fullName evidence="3">30S ribosomal protein S16</fullName>
    </alternativeName>
</protein>
<reference key="1">
    <citation type="submission" date="2006-12" db="EMBL/GenBank/DDBJ databases">
        <authorList>
            <person name="Hendrix L."/>
            <person name="Mohamoud Y."/>
            <person name="Radune D."/>
            <person name="Shvartsbeyn A."/>
            <person name="Daugherty S."/>
            <person name="Dodson R."/>
            <person name="Durkin A.S."/>
            <person name="Harkins D."/>
            <person name="Huot H."/>
            <person name="Kothari S.P."/>
            <person name="Madupu R."/>
            <person name="Li J."/>
            <person name="Nelson W.C."/>
            <person name="Shrivastava S."/>
            <person name="Giglio M.G."/>
            <person name="Haft D."/>
            <person name="Selengut J."/>
            <person name="Fraser-Ligget C."/>
            <person name="Seshadri R."/>
        </authorList>
    </citation>
    <scope>NUCLEOTIDE SEQUENCE [LARGE SCALE GENOMIC DNA]</scope>
    <source>
        <strain>ATCC 35685 / KC583 / Herrer 020/F12,63</strain>
    </source>
</reference>
<feature type="chain" id="PRO_1000049215" description="Small ribosomal subunit protein bS16">
    <location>
        <begin position="1"/>
        <end position="120"/>
    </location>
</feature>
<feature type="region of interest" description="Disordered" evidence="2">
    <location>
        <begin position="80"/>
        <end position="120"/>
    </location>
</feature>
<feature type="compositionally biased region" description="Basic residues" evidence="2">
    <location>
        <begin position="81"/>
        <end position="90"/>
    </location>
</feature>
<feature type="compositionally biased region" description="Basic and acidic residues" evidence="2">
    <location>
        <begin position="91"/>
        <end position="101"/>
    </location>
</feature>
<feature type="compositionally biased region" description="Basic and acidic residues" evidence="2">
    <location>
        <begin position="109"/>
        <end position="120"/>
    </location>
</feature>
<proteinExistence type="inferred from homology"/>
<evidence type="ECO:0000255" key="1">
    <source>
        <dbReference type="HAMAP-Rule" id="MF_00385"/>
    </source>
</evidence>
<evidence type="ECO:0000256" key="2">
    <source>
        <dbReference type="SAM" id="MobiDB-lite"/>
    </source>
</evidence>
<evidence type="ECO:0000305" key="3"/>
<keyword id="KW-0687">Ribonucleoprotein</keyword>
<keyword id="KW-0689">Ribosomal protein</keyword>
<sequence length="120" mass="13427">MALKIRLSRGGSKKRPYYHIVVADARSPRDGRFLERVGAWDPMLPKDKPRVKLNEDRIQHWLNQGAQPTDRVLRFLDAAGLKKRPARNNPHKGEPGKKAQERIAAAKQAAEDAKAAEASA</sequence>
<dbReference type="EMBL" id="CP000524">
    <property type="protein sequence ID" value="ABM44631.1"/>
    <property type="molecule type" value="Genomic_DNA"/>
</dbReference>
<dbReference type="RefSeq" id="WP_005765801.1">
    <property type="nucleotide sequence ID" value="NC_008783.1"/>
</dbReference>
<dbReference type="SMR" id="A1UR04"/>
<dbReference type="STRING" id="360095.BARBAKC583_0069"/>
<dbReference type="GeneID" id="4683886"/>
<dbReference type="KEGG" id="bbk:BARBAKC583_0069"/>
<dbReference type="PATRIC" id="fig|360095.6.peg.69"/>
<dbReference type="eggNOG" id="COG0228">
    <property type="taxonomic scope" value="Bacteria"/>
</dbReference>
<dbReference type="HOGENOM" id="CLU_100590_3_1_5"/>
<dbReference type="OrthoDB" id="9807878at2"/>
<dbReference type="Proteomes" id="UP000000643">
    <property type="component" value="Chromosome"/>
</dbReference>
<dbReference type="GO" id="GO:0005737">
    <property type="term" value="C:cytoplasm"/>
    <property type="evidence" value="ECO:0007669"/>
    <property type="project" value="UniProtKB-ARBA"/>
</dbReference>
<dbReference type="GO" id="GO:0015935">
    <property type="term" value="C:small ribosomal subunit"/>
    <property type="evidence" value="ECO:0007669"/>
    <property type="project" value="TreeGrafter"/>
</dbReference>
<dbReference type="GO" id="GO:0003735">
    <property type="term" value="F:structural constituent of ribosome"/>
    <property type="evidence" value="ECO:0007669"/>
    <property type="project" value="InterPro"/>
</dbReference>
<dbReference type="GO" id="GO:0006412">
    <property type="term" value="P:translation"/>
    <property type="evidence" value="ECO:0007669"/>
    <property type="project" value="UniProtKB-UniRule"/>
</dbReference>
<dbReference type="Gene3D" id="3.30.1320.10">
    <property type="match status" value="1"/>
</dbReference>
<dbReference type="HAMAP" id="MF_00385">
    <property type="entry name" value="Ribosomal_bS16"/>
    <property type="match status" value="1"/>
</dbReference>
<dbReference type="InterPro" id="IPR000307">
    <property type="entry name" value="Ribosomal_bS16"/>
</dbReference>
<dbReference type="InterPro" id="IPR023803">
    <property type="entry name" value="Ribosomal_bS16_dom_sf"/>
</dbReference>
<dbReference type="NCBIfam" id="TIGR00002">
    <property type="entry name" value="S16"/>
    <property type="match status" value="1"/>
</dbReference>
<dbReference type="PANTHER" id="PTHR12919">
    <property type="entry name" value="30S RIBOSOMAL PROTEIN S16"/>
    <property type="match status" value="1"/>
</dbReference>
<dbReference type="PANTHER" id="PTHR12919:SF20">
    <property type="entry name" value="SMALL RIBOSOMAL SUBUNIT PROTEIN BS16M"/>
    <property type="match status" value="1"/>
</dbReference>
<dbReference type="Pfam" id="PF00886">
    <property type="entry name" value="Ribosomal_S16"/>
    <property type="match status" value="1"/>
</dbReference>
<dbReference type="SUPFAM" id="SSF54565">
    <property type="entry name" value="Ribosomal protein S16"/>
    <property type="match status" value="1"/>
</dbReference>
<organism>
    <name type="scientific">Bartonella bacilliformis (strain ATCC 35685 / KC583 / Herrer 020/F12,63)</name>
    <dbReference type="NCBI Taxonomy" id="360095"/>
    <lineage>
        <taxon>Bacteria</taxon>
        <taxon>Pseudomonadati</taxon>
        <taxon>Pseudomonadota</taxon>
        <taxon>Alphaproteobacteria</taxon>
        <taxon>Hyphomicrobiales</taxon>
        <taxon>Bartonellaceae</taxon>
        <taxon>Bartonella</taxon>
    </lineage>
</organism>
<gene>
    <name evidence="1" type="primary">rpsP</name>
    <name type="ordered locus">BARBAKC583_0069</name>
</gene>
<name>RS16_BARBK</name>
<comment type="similarity">
    <text evidence="1">Belongs to the bacterial ribosomal protein bS16 family.</text>
</comment>
<accession>A1UR04</accession>